<proteinExistence type="inferred from homology"/>
<gene>
    <name evidence="1" type="primary">fusA</name>
    <name type="ordered locus">XfasM23_2102</name>
</gene>
<evidence type="ECO:0000255" key="1">
    <source>
        <dbReference type="HAMAP-Rule" id="MF_00054"/>
    </source>
</evidence>
<protein>
    <recommendedName>
        <fullName evidence="1">Elongation factor G</fullName>
        <shortName evidence="1">EF-G</shortName>
    </recommendedName>
</protein>
<keyword id="KW-0963">Cytoplasm</keyword>
<keyword id="KW-0251">Elongation factor</keyword>
<keyword id="KW-0342">GTP-binding</keyword>
<keyword id="KW-0547">Nucleotide-binding</keyword>
<keyword id="KW-0648">Protein biosynthesis</keyword>
<reference key="1">
    <citation type="journal article" date="2010" name="J. Bacteriol.">
        <title>Whole genome sequences of two Xylella fastidiosa strains (M12 and M23) causing almond leaf scorch disease in California.</title>
        <authorList>
            <person name="Chen J."/>
            <person name="Xie G."/>
            <person name="Han S."/>
            <person name="Chertkov O."/>
            <person name="Sims D."/>
            <person name="Civerolo E.L."/>
        </authorList>
    </citation>
    <scope>NUCLEOTIDE SEQUENCE [LARGE SCALE GENOMIC DNA]</scope>
    <source>
        <strain>M23</strain>
    </source>
</reference>
<accession>B2IA64</accession>
<dbReference type="EMBL" id="CP001011">
    <property type="protein sequence ID" value="ACB93500.1"/>
    <property type="molecule type" value="Genomic_DNA"/>
</dbReference>
<dbReference type="RefSeq" id="WP_011098325.1">
    <property type="nucleotide sequence ID" value="NC_010577.1"/>
</dbReference>
<dbReference type="SMR" id="B2IA64"/>
<dbReference type="GeneID" id="93905858"/>
<dbReference type="KEGG" id="xfn:XfasM23_2102"/>
<dbReference type="HOGENOM" id="CLU_002794_4_1_6"/>
<dbReference type="Proteomes" id="UP000001698">
    <property type="component" value="Chromosome"/>
</dbReference>
<dbReference type="GO" id="GO:0005737">
    <property type="term" value="C:cytoplasm"/>
    <property type="evidence" value="ECO:0007669"/>
    <property type="project" value="UniProtKB-SubCell"/>
</dbReference>
<dbReference type="GO" id="GO:0005525">
    <property type="term" value="F:GTP binding"/>
    <property type="evidence" value="ECO:0007669"/>
    <property type="project" value="UniProtKB-UniRule"/>
</dbReference>
<dbReference type="GO" id="GO:0003924">
    <property type="term" value="F:GTPase activity"/>
    <property type="evidence" value="ECO:0007669"/>
    <property type="project" value="InterPro"/>
</dbReference>
<dbReference type="GO" id="GO:0097216">
    <property type="term" value="F:guanosine tetraphosphate binding"/>
    <property type="evidence" value="ECO:0007669"/>
    <property type="project" value="UniProtKB-ARBA"/>
</dbReference>
<dbReference type="GO" id="GO:0003746">
    <property type="term" value="F:translation elongation factor activity"/>
    <property type="evidence" value="ECO:0007669"/>
    <property type="project" value="UniProtKB-UniRule"/>
</dbReference>
<dbReference type="GO" id="GO:0032790">
    <property type="term" value="P:ribosome disassembly"/>
    <property type="evidence" value="ECO:0007669"/>
    <property type="project" value="TreeGrafter"/>
</dbReference>
<dbReference type="CDD" id="cd01886">
    <property type="entry name" value="EF-G"/>
    <property type="match status" value="1"/>
</dbReference>
<dbReference type="CDD" id="cd16262">
    <property type="entry name" value="EFG_III"/>
    <property type="match status" value="1"/>
</dbReference>
<dbReference type="CDD" id="cd01434">
    <property type="entry name" value="EFG_mtEFG1_IV"/>
    <property type="match status" value="1"/>
</dbReference>
<dbReference type="CDD" id="cd03713">
    <property type="entry name" value="EFG_mtEFG_C"/>
    <property type="match status" value="1"/>
</dbReference>
<dbReference type="CDD" id="cd04088">
    <property type="entry name" value="EFG_mtEFG_II"/>
    <property type="match status" value="1"/>
</dbReference>
<dbReference type="FunFam" id="2.40.30.10:FF:000006">
    <property type="entry name" value="Elongation factor G"/>
    <property type="match status" value="1"/>
</dbReference>
<dbReference type="FunFam" id="3.30.230.10:FF:000003">
    <property type="entry name" value="Elongation factor G"/>
    <property type="match status" value="1"/>
</dbReference>
<dbReference type="FunFam" id="3.30.70.240:FF:000001">
    <property type="entry name" value="Elongation factor G"/>
    <property type="match status" value="1"/>
</dbReference>
<dbReference type="FunFam" id="3.30.70.870:FF:000001">
    <property type="entry name" value="Elongation factor G"/>
    <property type="match status" value="1"/>
</dbReference>
<dbReference type="FunFam" id="3.40.50.300:FF:000029">
    <property type="entry name" value="Elongation factor G"/>
    <property type="match status" value="1"/>
</dbReference>
<dbReference type="Gene3D" id="3.30.230.10">
    <property type="match status" value="1"/>
</dbReference>
<dbReference type="Gene3D" id="3.30.70.240">
    <property type="match status" value="1"/>
</dbReference>
<dbReference type="Gene3D" id="3.30.70.870">
    <property type="entry name" value="Elongation Factor G (Translational Gtpase), domain 3"/>
    <property type="match status" value="1"/>
</dbReference>
<dbReference type="Gene3D" id="3.40.50.300">
    <property type="entry name" value="P-loop containing nucleotide triphosphate hydrolases"/>
    <property type="match status" value="1"/>
</dbReference>
<dbReference type="Gene3D" id="2.40.30.10">
    <property type="entry name" value="Translation factors"/>
    <property type="match status" value="1"/>
</dbReference>
<dbReference type="HAMAP" id="MF_00054_B">
    <property type="entry name" value="EF_G_EF_2_B"/>
    <property type="match status" value="1"/>
</dbReference>
<dbReference type="InterPro" id="IPR041095">
    <property type="entry name" value="EFG_II"/>
</dbReference>
<dbReference type="InterPro" id="IPR009022">
    <property type="entry name" value="EFG_III"/>
</dbReference>
<dbReference type="InterPro" id="IPR035647">
    <property type="entry name" value="EFG_III/V"/>
</dbReference>
<dbReference type="InterPro" id="IPR047872">
    <property type="entry name" value="EFG_IV"/>
</dbReference>
<dbReference type="InterPro" id="IPR035649">
    <property type="entry name" value="EFG_V"/>
</dbReference>
<dbReference type="InterPro" id="IPR000640">
    <property type="entry name" value="EFG_V-like"/>
</dbReference>
<dbReference type="InterPro" id="IPR004161">
    <property type="entry name" value="EFTu-like_2"/>
</dbReference>
<dbReference type="InterPro" id="IPR031157">
    <property type="entry name" value="G_TR_CS"/>
</dbReference>
<dbReference type="InterPro" id="IPR027417">
    <property type="entry name" value="P-loop_NTPase"/>
</dbReference>
<dbReference type="InterPro" id="IPR020568">
    <property type="entry name" value="Ribosomal_Su5_D2-typ_SF"/>
</dbReference>
<dbReference type="InterPro" id="IPR014721">
    <property type="entry name" value="Ribsml_uS5_D2-typ_fold_subgr"/>
</dbReference>
<dbReference type="InterPro" id="IPR005225">
    <property type="entry name" value="Small_GTP-bd"/>
</dbReference>
<dbReference type="InterPro" id="IPR000795">
    <property type="entry name" value="T_Tr_GTP-bd_dom"/>
</dbReference>
<dbReference type="InterPro" id="IPR009000">
    <property type="entry name" value="Transl_B-barrel_sf"/>
</dbReference>
<dbReference type="InterPro" id="IPR004540">
    <property type="entry name" value="Transl_elong_EFG/EF2"/>
</dbReference>
<dbReference type="InterPro" id="IPR005517">
    <property type="entry name" value="Transl_elong_EFG/EF2_IV"/>
</dbReference>
<dbReference type="NCBIfam" id="TIGR00484">
    <property type="entry name" value="EF-G"/>
    <property type="match status" value="1"/>
</dbReference>
<dbReference type="NCBIfam" id="NF009381">
    <property type="entry name" value="PRK12740.1-5"/>
    <property type="match status" value="1"/>
</dbReference>
<dbReference type="NCBIfam" id="TIGR00231">
    <property type="entry name" value="small_GTP"/>
    <property type="match status" value="1"/>
</dbReference>
<dbReference type="PANTHER" id="PTHR43261:SF1">
    <property type="entry name" value="RIBOSOME-RELEASING FACTOR 2, MITOCHONDRIAL"/>
    <property type="match status" value="1"/>
</dbReference>
<dbReference type="PANTHER" id="PTHR43261">
    <property type="entry name" value="TRANSLATION ELONGATION FACTOR G-RELATED"/>
    <property type="match status" value="1"/>
</dbReference>
<dbReference type="Pfam" id="PF00679">
    <property type="entry name" value="EFG_C"/>
    <property type="match status" value="1"/>
</dbReference>
<dbReference type="Pfam" id="PF14492">
    <property type="entry name" value="EFG_III"/>
    <property type="match status" value="1"/>
</dbReference>
<dbReference type="Pfam" id="PF03764">
    <property type="entry name" value="EFG_IV"/>
    <property type="match status" value="1"/>
</dbReference>
<dbReference type="Pfam" id="PF00009">
    <property type="entry name" value="GTP_EFTU"/>
    <property type="match status" value="1"/>
</dbReference>
<dbReference type="Pfam" id="PF03144">
    <property type="entry name" value="GTP_EFTU_D2"/>
    <property type="match status" value="1"/>
</dbReference>
<dbReference type="PRINTS" id="PR00315">
    <property type="entry name" value="ELONGATNFCT"/>
</dbReference>
<dbReference type="SMART" id="SM00838">
    <property type="entry name" value="EFG_C"/>
    <property type="match status" value="1"/>
</dbReference>
<dbReference type="SMART" id="SM00889">
    <property type="entry name" value="EFG_IV"/>
    <property type="match status" value="1"/>
</dbReference>
<dbReference type="SUPFAM" id="SSF54980">
    <property type="entry name" value="EF-G C-terminal domain-like"/>
    <property type="match status" value="2"/>
</dbReference>
<dbReference type="SUPFAM" id="SSF52540">
    <property type="entry name" value="P-loop containing nucleoside triphosphate hydrolases"/>
    <property type="match status" value="1"/>
</dbReference>
<dbReference type="SUPFAM" id="SSF54211">
    <property type="entry name" value="Ribosomal protein S5 domain 2-like"/>
    <property type="match status" value="1"/>
</dbReference>
<dbReference type="SUPFAM" id="SSF50447">
    <property type="entry name" value="Translation proteins"/>
    <property type="match status" value="1"/>
</dbReference>
<dbReference type="PROSITE" id="PS00301">
    <property type="entry name" value="G_TR_1"/>
    <property type="match status" value="1"/>
</dbReference>
<dbReference type="PROSITE" id="PS51722">
    <property type="entry name" value="G_TR_2"/>
    <property type="match status" value="1"/>
</dbReference>
<sequence length="705" mass="78088">MVRATPIHRYRNIGIMAHIDAGKTTTSERILFYAGVCHQMGEVHDGAAVMDWMEQEQERGITITSAATTVFWSGMDKSMPQHRFNIIDTPGHVDFTIEVERSLRVLDGAVFVLCAVGGVQPQSETVWRQANKYFVPRMAFVNKMDRTGANFDKVVEQLKARLGAYPVPMQVPIGAEDGFEGVIDLLKMKAIHWDAASQGTVFEYRDIPIELVDKASKARAFMVEAAAEATEELMDKYLNEGELKEQEILEGLRERTLKVEIIPVFCGSAFKNKGVQAMLDGVIHLLPSPADRPPVQGLDEKGNECRCKASDSEPFSALAFKIMTDPFVGSLTFFRVYSGVLNSGDQVYNSVKLKKERVGRILQMHSNQRDEIKEVRAGDIAAAVGLKDVTTGDTLCDQNHIITLERMIFPEPVISMAVEPKTKSDQEKMGMALGRLAQEDPSFRVKTDEESGQTIISGMGELHLDIIVDRMRREFNVEANVGKPQVAYRETIRKSDVKSDYKHVKQSGGKGQYGHVVIEISPMSDVDKQHPDVKGDFLFINEITGGVIPKEFISPIEKGLRETITSGPLAGFPVVGVKVKLVFGSYHDVDSSEMAFKLAASMAFKQGFAKANPVLLEPIMKVEIVSPEDYLGDIMGDVSRRRGVLQGQDDSLSGKVINAMIPLGEMFGYATSLRSMTQGRATFAMEFDHYEEAPTNIADTVIKKT</sequence>
<feature type="chain" id="PRO_1000091782" description="Elongation factor G">
    <location>
        <begin position="1"/>
        <end position="705"/>
    </location>
</feature>
<feature type="domain" description="tr-type G">
    <location>
        <begin position="8"/>
        <end position="290"/>
    </location>
</feature>
<feature type="binding site" evidence="1">
    <location>
        <begin position="17"/>
        <end position="24"/>
    </location>
    <ligand>
        <name>GTP</name>
        <dbReference type="ChEBI" id="CHEBI:37565"/>
    </ligand>
</feature>
<feature type="binding site" evidence="1">
    <location>
        <begin position="88"/>
        <end position="92"/>
    </location>
    <ligand>
        <name>GTP</name>
        <dbReference type="ChEBI" id="CHEBI:37565"/>
    </ligand>
</feature>
<feature type="binding site" evidence="1">
    <location>
        <begin position="142"/>
        <end position="145"/>
    </location>
    <ligand>
        <name>GTP</name>
        <dbReference type="ChEBI" id="CHEBI:37565"/>
    </ligand>
</feature>
<organism>
    <name type="scientific">Xylella fastidiosa (strain M23)</name>
    <dbReference type="NCBI Taxonomy" id="405441"/>
    <lineage>
        <taxon>Bacteria</taxon>
        <taxon>Pseudomonadati</taxon>
        <taxon>Pseudomonadota</taxon>
        <taxon>Gammaproteobacteria</taxon>
        <taxon>Lysobacterales</taxon>
        <taxon>Lysobacteraceae</taxon>
        <taxon>Xylella</taxon>
    </lineage>
</organism>
<name>EFG_XYLF2</name>
<comment type="function">
    <text evidence="1">Catalyzes the GTP-dependent ribosomal translocation step during translation elongation. During this step, the ribosome changes from the pre-translocational (PRE) to the post-translocational (POST) state as the newly formed A-site-bound peptidyl-tRNA and P-site-bound deacylated tRNA move to the P and E sites, respectively. Catalyzes the coordinated movement of the two tRNA molecules, the mRNA and conformational changes in the ribosome.</text>
</comment>
<comment type="subcellular location">
    <subcellularLocation>
        <location evidence="1">Cytoplasm</location>
    </subcellularLocation>
</comment>
<comment type="similarity">
    <text evidence="1">Belongs to the TRAFAC class translation factor GTPase superfamily. Classic translation factor GTPase family. EF-G/EF-2 subfamily.</text>
</comment>